<gene>
    <name evidence="1" type="primary">trmB</name>
    <name type="ordered locus">Hac_0671</name>
</gene>
<keyword id="KW-0489">Methyltransferase</keyword>
<keyword id="KW-0949">S-adenosyl-L-methionine</keyword>
<keyword id="KW-0808">Transferase</keyword>
<keyword id="KW-0819">tRNA processing</keyword>
<name>TRMB_HELAH</name>
<feature type="chain" id="PRO_0000288157" description="tRNA (guanine-N(7)-)-methyltransferase">
    <location>
        <begin position="1"/>
        <end position="398"/>
    </location>
</feature>
<feature type="binding site" evidence="1">
    <location>
        <position position="124"/>
    </location>
    <ligand>
        <name>S-adenosyl-L-methionine</name>
        <dbReference type="ChEBI" id="CHEBI:59789"/>
    </ligand>
</feature>
<feature type="binding site" evidence="1">
    <location>
        <position position="149"/>
    </location>
    <ligand>
        <name>S-adenosyl-L-methionine</name>
        <dbReference type="ChEBI" id="CHEBI:59789"/>
    </ligand>
</feature>
<feature type="binding site" evidence="1">
    <location>
        <position position="176"/>
    </location>
    <ligand>
        <name>S-adenosyl-L-methionine</name>
        <dbReference type="ChEBI" id="CHEBI:59789"/>
    </ligand>
</feature>
<feature type="binding site" evidence="1">
    <location>
        <position position="232"/>
    </location>
    <ligand>
        <name>substrate</name>
    </ligand>
</feature>
<sequence length="398" mass="46494">MPHFLAKLDCKPLEYPIISGDFCFHKEFSSLKHPTKSCVYASFKDHIFLLQKIRRANDFLIKSEKATPLKREILKQALRIYAQSFEVILHNLQENSKHASGKKALDLEDFEDFIKENQAPILMEIGFGSGRHLMELAKNNPTKTCLGIEIYTPSIAQVLKQIELLDLKNLHVLQGDGRLVLESIPHHKCEKIFVHFPVPWNDKKHRRVLSERFLDEALRVLEPNGFLELRTDDTLYFEDSLKLALKHFKSEIEIKKNAQIPVVSKYEARWNKLKKDIYDLRIYSLESNETPFNNHAFDFSFDTITLNQKSVGMILKTPKIIKEGYFVHVCNIYENKGDFLVELSMGDFDWPMRLFVLSVKNQVFYLNKSPLKTLNNHKAHLLLQNILKEFDEYNHCSE</sequence>
<organism>
    <name type="scientific">Helicobacter acinonychis (strain Sheeba)</name>
    <dbReference type="NCBI Taxonomy" id="382638"/>
    <lineage>
        <taxon>Bacteria</taxon>
        <taxon>Pseudomonadati</taxon>
        <taxon>Campylobacterota</taxon>
        <taxon>Epsilonproteobacteria</taxon>
        <taxon>Campylobacterales</taxon>
        <taxon>Helicobacteraceae</taxon>
        <taxon>Helicobacter</taxon>
    </lineage>
</organism>
<accession>Q17Y01</accession>
<protein>
    <recommendedName>
        <fullName evidence="1">tRNA (guanine-N(7)-)-methyltransferase</fullName>
        <ecNumber evidence="1">2.1.1.33</ecNumber>
    </recommendedName>
    <alternativeName>
        <fullName evidence="1">tRNA (guanine(46)-N(7))-methyltransferase</fullName>
    </alternativeName>
    <alternativeName>
        <fullName evidence="1">tRNA(m7G46)-methyltransferase</fullName>
    </alternativeName>
</protein>
<evidence type="ECO:0000255" key="1">
    <source>
        <dbReference type="HAMAP-Rule" id="MF_01057"/>
    </source>
</evidence>
<reference key="1">
    <citation type="journal article" date="2006" name="PLoS Genet.">
        <title>Who ate whom? Adaptive Helicobacter genomic changes that accompanied a host jump from early humans to large felines.</title>
        <authorList>
            <person name="Eppinger M."/>
            <person name="Baar C."/>
            <person name="Linz B."/>
            <person name="Raddatz G."/>
            <person name="Lanz C."/>
            <person name="Keller H."/>
            <person name="Morelli G."/>
            <person name="Gressmann H."/>
            <person name="Achtman M."/>
            <person name="Schuster S.C."/>
        </authorList>
    </citation>
    <scope>NUCLEOTIDE SEQUENCE [LARGE SCALE GENOMIC DNA]</scope>
    <source>
        <strain>Sheeba</strain>
    </source>
</reference>
<comment type="function">
    <text evidence="1">Catalyzes the formation of N(7)-methylguanine at position 46 (m7G46) in tRNA.</text>
</comment>
<comment type="catalytic activity">
    <reaction evidence="1">
        <text>guanosine(46) in tRNA + S-adenosyl-L-methionine = N(7)-methylguanosine(46) in tRNA + S-adenosyl-L-homocysteine</text>
        <dbReference type="Rhea" id="RHEA:42708"/>
        <dbReference type="Rhea" id="RHEA-COMP:10188"/>
        <dbReference type="Rhea" id="RHEA-COMP:10189"/>
        <dbReference type="ChEBI" id="CHEBI:57856"/>
        <dbReference type="ChEBI" id="CHEBI:59789"/>
        <dbReference type="ChEBI" id="CHEBI:74269"/>
        <dbReference type="ChEBI" id="CHEBI:74480"/>
        <dbReference type="EC" id="2.1.1.33"/>
    </reaction>
</comment>
<comment type="pathway">
    <text evidence="1">tRNA modification; N(7)-methylguanine-tRNA biosynthesis.</text>
</comment>
<comment type="similarity">
    <text evidence="1">Belongs to the class I-like SAM-binding methyltransferase superfamily. TrmB family.</text>
</comment>
<proteinExistence type="inferred from homology"/>
<dbReference type="EC" id="2.1.1.33" evidence="1"/>
<dbReference type="EMBL" id="AM260522">
    <property type="protein sequence ID" value="CAJ99475.1"/>
    <property type="molecule type" value="Genomic_DNA"/>
</dbReference>
<dbReference type="RefSeq" id="WP_011577588.1">
    <property type="nucleotide sequence ID" value="NC_008229.1"/>
</dbReference>
<dbReference type="SMR" id="Q17Y01"/>
<dbReference type="STRING" id="382638.Hac_0671"/>
<dbReference type="GeneID" id="31758126"/>
<dbReference type="KEGG" id="hac:Hac_0671"/>
<dbReference type="eggNOG" id="COG0220">
    <property type="taxonomic scope" value="Bacteria"/>
</dbReference>
<dbReference type="HOGENOM" id="CLU_041532_0_0_7"/>
<dbReference type="OrthoDB" id="9802090at2"/>
<dbReference type="BioCyc" id="HACI382638:HAC_RS02935-MONOMER"/>
<dbReference type="UniPathway" id="UPA00989"/>
<dbReference type="Proteomes" id="UP000000775">
    <property type="component" value="Chromosome"/>
</dbReference>
<dbReference type="GO" id="GO:0043527">
    <property type="term" value="C:tRNA methyltransferase complex"/>
    <property type="evidence" value="ECO:0007669"/>
    <property type="project" value="TreeGrafter"/>
</dbReference>
<dbReference type="GO" id="GO:0008176">
    <property type="term" value="F:tRNA (guanine(46)-N7)-methyltransferase activity"/>
    <property type="evidence" value="ECO:0007669"/>
    <property type="project" value="UniProtKB-UniRule"/>
</dbReference>
<dbReference type="CDD" id="cd02440">
    <property type="entry name" value="AdoMet_MTases"/>
    <property type="match status" value="1"/>
</dbReference>
<dbReference type="Gene3D" id="3.40.50.150">
    <property type="entry name" value="Vaccinia Virus protein VP39"/>
    <property type="match status" value="1"/>
</dbReference>
<dbReference type="HAMAP" id="MF_01057">
    <property type="entry name" value="tRNA_methyltr_TrmB"/>
    <property type="match status" value="1"/>
</dbReference>
<dbReference type="InterPro" id="IPR029063">
    <property type="entry name" value="SAM-dependent_MTases_sf"/>
</dbReference>
<dbReference type="InterPro" id="IPR003358">
    <property type="entry name" value="tRNA_(Gua-N-7)_MeTrfase_Trmb"/>
</dbReference>
<dbReference type="InterPro" id="IPR055361">
    <property type="entry name" value="tRNA_methyltr_TrmB_bact"/>
</dbReference>
<dbReference type="NCBIfam" id="NF010719">
    <property type="entry name" value="PRK14121.1"/>
    <property type="match status" value="1"/>
</dbReference>
<dbReference type="NCBIfam" id="TIGR00091">
    <property type="entry name" value="tRNA (guanosine(46)-N7)-methyltransferase TrmB"/>
    <property type="match status" value="1"/>
</dbReference>
<dbReference type="PANTHER" id="PTHR23417">
    <property type="entry name" value="3-DEOXY-D-MANNO-OCTULOSONIC-ACID TRANSFERASE/TRNA GUANINE-N 7 - -METHYLTRANSFERASE"/>
    <property type="match status" value="1"/>
</dbReference>
<dbReference type="PANTHER" id="PTHR23417:SF14">
    <property type="entry name" value="PENTACOTRIPEPTIDE-REPEAT REGION OF PRORP DOMAIN-CONTAINING PROTEIN"/>
    <property type="match status" value="1"/>
</dbReference>
<dbReference type="Pfam" id="PF02390">
    <property type="entry name" value="Methyltransf_4"/>
    <property type="match status" value="1"/>
</dbReference>
<dbReference type="SUPFAM" id="SSF53335">
    <property type="entry name" value="S-adenosyl-L-methionine-dependent methyltransferases"/>
    <property type="match status" value="1"/>
</dbReference>
<dbReference type="PROSITE" id="PS51625">
    <property type="entry name" value="SAM_MT_TRMB"/>
    <property type="match status" value="1"/>
</dbReference>